<accession>Q5KYL9</accession>
<comment type="catalytic activity">
    <reaction evidence="1">
        <text>urea + 2 H2O + H(+) = hydrogencarbonate + 2 NH4(+)</text>
        <dbReference type="Rhea" id="RHEA:20557"/>
        <dbReference type="ChEBI" id="CHEBI:15377"/>
        <dbReference type="ChEBI" id="CHEBI:15378"/>
        <dbReference type="ChEBI" id="CHEBI:16199"/>
        <dbReference type="ChEBI" id="CHEBI:17544"/>
        <dbReference type="ChEBI" id="CHEBI:28938"/>
        <dbReference type="EC" id="3.5.1.5"/>
    </reaction>
</comment>
<comment type="pathway">
    <text evidence="1">Nitrogen metabolism; urea degradation; CO(2) and NH(3) from urea (urease route): step 1/1.</text>
</comment>
<comment type="subunit">
    <text evidence="1">Heterotrimer of UreA (gamma), UreB (beta) and UreC (alpha) subunits. Three heterotrimers associate to form the active enzyme.</text>
</comment>
<comment type="subcellular location">
    <subcellularLocation>
        <location evidence="1">Cytoplasm</location>
    </subcellularLocation>
</comment>
<comment type="similarity">
    <text evidence="1">Belongs to the urease gamma subunit family.</text>
</comment>
<feature type="chain" id="PRO_0000098013" description="Urease subunit gamma">
    <location>
        <begin position="1"/>
        <end position="101"/>
    </location>
</feature>
<organism>
    <name type="scientific">Geobacillus kaustophilus (strain HTA426)</name>
    <dbReference type="NCBI Taxonomy" id="235909"/>
    <lineage>
        <taxon>Bacteria</taxon>
        <taxon>Bacillati</taxon>
        <taxon>Bacillota</taxon>
        <taxon>Bacilli</taxon>
        <taxon>Bacillales</taxon>
        <taxon>Anoxybacillaceae</taxon>
        <taxon>Geobacillus</taxon>
        <taxon>Geobacillus thermoleovorans group</taxon>
    </lineage>
</organism>
<proteinExistence type="inferred from homology"/>
<protein>
    <recommendedName>
        <fullName evidence="1">Urease subunit gamma</fullName>
        <ecNumber evidence="1">3.5.1.5</ecNumber>
    </recommendedName>
    <alternativeName>
        <fullName evidence="1">Urea amidohydrolase subunit gamma</fullName>
    </alternativeName>
</protein>
<keyword id="KW-0963">Cytoplasm</keyword>
<keyword id="KW-0378">Hydrolase</keyword>
<keyword id="KW-1185">Reference proteome</keyword>
<dbReference type="EC" id="3.5.1.5" evidence="1"/>
<dbReference type="EMBL" id="BA000043">
    <property type="protein sequence ID" value="BAD76217.1"/>
    <property type="molecule type" value="Genomic_DNA"/>
</dbReference>
<dbReference type="RefSeq" id="WP_011231418.1">
    <property type="nucleotide sequence ID" value="NC_006510.1"/>
</dbReference>
<dbReference type="SMR" id="Q5KYL9"/>
<dbReference type="STRING" id="235909.GK1932"/>
<dbReference type="KEGG" id="gka:GK1932"/>
<dbReference type="eggNOG" id="COG0831">
    <property type="taxonomic scope" value="Bacteria"/>
</dbReference>
<dbReference type="HOGENOM" id="CLU_145825_1_0_9"/>
<dbReference type="UniPathway" id="UPA00258">
    <property type="reaction ID" value="UER00370"/>
</dbReference>
<dbReference type="Proteomes" id="UP000001172">
    <property type="component" value="Chromosome"/>
</dbReference>
<dbReference type="GO" id="GO:0005737">
    <property type="term" value="C:cytoplasm"/>
    <property type="evidence" value="ECO:0007669"/>
    <property type="project" value="UniProtKB-SubCell"/>
</dbReference>
<dbReference type="GO" id="GO:0016151">
    <property type="term" value="F:nickel cation binding"/>
    <property type="evidence" value="ECO:0007669"/>
    <property type="project" value="InterPro"/>
</dbReference>
<dbReference type="GO" id="GO:0009039">
    <property type="term" value="F:urease activity"/>
    <property type="evidence" value="ECO:0007669"/>
    <property type="project" value="UniProtKB-UniRule"/>
</dbReference>
<dbReference type="GO" id="GO:0043419">
    <property type="term" value="P:urea catabolic process"/>
    <property type="evidence" value="ECO:0007669"/>
    <property type="project" value="UniProtKB-UniRule"/>
</dbReference>
<dbReference type="CDD" id="cd00390">
    <property type="entry name" value="Urease_gamma"/>
    <property type="match status" value="1"/>
</dbReference>
<dbReference type="Gene3D" id="3.30.280.10">
    <property type="entry name" value="Urease, gamma-like subunit"/>
    <property type="match status" value="1"/>
</dbReference>
<dbReference type="HAMAP" id="MF_00739">
    <property type="entry name" value="Urease_gamma"/>
    <property type="match status" value="1"/>
</dbReference>
<dbReference type="InterPro" id="IPR012010">
    <property type="entry name" value="Urease_gamma"/>
</dbReference>
<dbReference type="InterPro" id="IPR002026">
    <property type="entry name" value="Urease_gamma/gamma-beta_su"/>
</dbReference>
<dbReference type="InterPro" id="IPR036463">
    <property type="entry name" value="Urease_gamma_sf"/>
</dbReference>
<dbReference type="InterPro" id="IPR050069">
    <property type="entry name" value="Urease_subunit"/>
</dbReference>
<dbReference type="NCBIfam" id="NF009712">
    <property type="entry name" value="PRK13241.1"/>
    <property type="match status" value="1"/>
</dbReference>
<dbReference type="NCBIfam" id="TIGR00193">
    <property type="entry name" value="urease_gam"/>
    <property type="match status" value="1"/>
</dbReference>
<dbReference type="PANTHER" id="PTHR33569">
    <property type="entry name" value="UREASE"/>
    <property type="match status" value="1"/>
</dbReference>
<dbReference type="PANTHER" id="PTHR33569:SF1">
    <property type="entry name" value="UREASE"/>
    <property type="match status" value="1"/>
</dbReference>
<dbReference type="Pfam" id="PF00547">
    <property type="entry name" value="Urease_gamma"/>
    <property type="match status" value="1"/>
</dbReference>
<dbReference type="PIRSF" id="PIRSF001223">
    <property type="entry name" value="Urease_gamma"/>
    <property type="match status" value="1"/>
</dbReference>
<dbReference type="SUPFAM" id="SSF54111">
    <property type="entry name" value="Urease, gamma-subunit"/>
    <property type="match status" value="1"/>
</dbReference>
<sequence>MKLTPREQEKLLIVVAADLARRRKERGLKLNYPEAVALITYELLEGARDGRTVAELMQYGATILTRDDVMEGVADMIDEIQVEATFPDGTKLVTVHQPIRS</sequence>
<reference key="1">
    <citation type="journal article" date="2004" name="Nucleic Acids Res.">
        <title>Thermoadaptation trait revealed by the genome sequence of thermophilic Geobacillus kaustophilus.</title>
        <authorList>
            <person name="Takami H."/>
            <person name="Takaki Y."/>
            <person name="Chee G.-J."/>
            <person name="Nishi S."/>
            <person name="Shimamura S."/>
            <person name="Suzuki H."/>
            <person name="Matsui S."/>
            <person name="Uchiyama I."/>
        </authorList>
    </citation>
    <scope>NUCLEOTIDE SEQUENCE [LARGE SCALE GENOMIC DNA]</scope>
    <source>
        <strain>HTA426</strain>
    </source>
</reference>
<gene>
    <name evidence="1" type="primary">ureA</name>
    <name type="ordered locus">GK1932</name>
</gene>
<name>URE3_GEOKA</name>
<evidence type="ECO:0000255" key="1">
    <source>
        <dbReference type="HAMAP-Rule" id="MF_00739"/>
    </source>
</evidence>